<organism>
    <name type="scientific">Prochlorococcus marinus (strain MIT 9312)</name>
    <dbReference type="NCBI Taxonomy" id="74546"/>
    <lineage>
        <taxon>Bacteria</taxon>
        <taxon>Bacillati</taxon>
        <taxon>Cyanobacteriota</taxon>
        <taxon>Cyanophyceae</taxon>
        <taxon>Synechococcales</taxon>
        <taxon>Prochlorococcaceae</taxon>
        <taxon>Prochlorococcus</taxon>
    </lineage>
</organism>
<dbReference type="EMBL" id="CP000111">
    <property type="protein sequence ID" value="ABB49125.1"/>
    <property type="molecule type" value="Genomic_DNA"/>
</dbReference>
<dbReference type="RefSeq" id="WP_011375628.1">
    <property type="nucleotide sequence ID" value="NC_007577.1"/>
</dbReference>
<dbReference type="SMR" id="Q31DC0"/>
<dbReference type="STRING" id="74546.PMT9312_0064"/>
<dbReference type="KEGG" id="pmi:PMT9312_0064"/>
<dbReference type="HOGENOM" id="CLU_209178_0_0_3"/>
<dbReference type="OrthoDB" id="541645at2"/>
<dbReference type="Proteomes" id="UP000002715">
    <property type="component" value="Chromosome"/>
</dbReference>
<dbReference type="GO" id="GO:0009523">
    <property type="term" value="C:photosystem II"/>
    <property type="evidence" value="ECO:0007669"/>
    <property type="project" value="UniProtKB-KW"/>
</dbReference>
<dbReference type="GO" id="GO:0031676">
    <property type="term" value="C:plasma membrane-derived thylakoid membrane"/>
    <property type="evidence" value="ECO:0007669"/>
    <property type="project" value="UniProtKB-SubCell"/>
</dbReference>
<dbReference type="GO" id="GO:0015979">
    <property type="term" value="P:photosynthesis"/>
    <property type="evidence" value="ECO:0007669"/>
    <property type="project" value="UniProtKB-KW"/>
</dbReference>
<dbReference type="HAMAP" id="MF_01388">
    <property type="entry name" value="PSII_PsbX_2"/>
    <property type="match status" value="1"/>
</dbReference>
<dbReference type="InterPro" id="IPR009518">
    <property type="entry name" value="PSII_PsbX"/>
</dbReference>
<dbReference type="InterPro" id="IPR023428">
    <property type="entry name" value="PSII_PsbX_type_2_subfam"/>
</dbReference>
<dbReference type="Pfam" id="PF06596">
    <property type="entry name" value="PsbX"/>
    <property type="match status" value="1"/>
</dbReference>
<reference key="1">
    <citation type="journal article" date="2006" name="Science">
        <title>Genomic islands and the ecology and evolution of Prochlorococcus.</title>
        <authorList>
            <person name="Coleman M.L."/>
            <person name="Sullivan M.B."/>
            <person name="Martiny A.C."/>
            <person name="Steglich C."/>
            <person name="Barry K."/>
            <person name="Delong E.F."/>
            <person name="Chisholm S.W."/>
        </authorList>
    </citation>
    <scope>NUCLEOTIDE SEQUENCE [LARGE SCALE GENOMIC DNA]</scope>
    <source>
        <strain>MIT 9312</strain>
    </source>
</reference>
<accession>Q31DC0</accession>
<sequence length="61" mass="6461">MFQISNLLLAADFSSEVANNSAVGMIGSFIAAALLIVIPATAFLIFVSQKDSLNRTSTGRR</sequence>
<keyword id="KW-0472">Membrane</keyword>
<keyword id="KW-0602">Photosynthesis</keyword>
<keyword id="KW-0604">Photosystem II</keyword>
<keyword id="KW-0793">Thylakoid</keyword>
<keyword id="KW-0812">Transmembrane</keyword>
<keyword id="KW-1133">Transmembrane helix</keyword>
<feature type="chain" id="PRO_0000345373" description="Photosystem II reaction center X protein">
    <location>
        <begin position="1"/>
        <end position="61"/>
    </location>
</feature>
<feature type="transmembrane region" description="Helical" evidence="1">
    <location>
        <begin position="26"/>
        <end position="46"/>
    </location>
</feature>
<comment type="function">
    <text evidence="1">Involved in the binding and/or turnover of quinones at the Q(B) site of Photosystem II.</text>
</comment>
<comment type="subunit">
    <text evidence="1">PSII consists of a core antenna complex that captures photons, and an electron transfer chain that converts photonic excitation into a charge separation. PSII forms dimeric complexes.</text>
</comment>
<comment type="subcellular location">
    <subcellularLocation>
        <location evidence="1">Cellular thylakoid membrane</location>
        <topology evidence="1">Single-pass membrane protein</topology>
    </subcellularLocation>
</comment>
<comment type="similarity">
    <text evidence="1">Belongs to the PsbX family. Type 2 subfamily.</text>
</comment>
<evidence type="ECO:0000255" key="1">
    <source>
        <dbReference type="HAMAP-Rule" id="MF_01388"/>
    </source>
</evidence>
<protein>
    <recommendedName>
        <fullName evidence="1">Photosystem II reaction center X protein</fullName>
    </recommendedName>
</protein>
<gene>
    <name evidence="1" type="primary">psbX</name>
    <name type="ordered locus">PMT9312_0064</name>
</gene>
<name>PSBX_PROM9</name>
<proteinExistence type="inferred from homology"/>